<name>TRUB_SALCH</name>
<reference key="1">
    <citation type="journal article" date="2005" name="Nucleic Acids Res.">
        <title>The genome sequence of Salmonella enterica serovar Choleraesuis, a highly invasive and resistant zoonotic pathogen.</title>
        <authorList>
            <person name="Chiu C.-H."/>
            <person name="Tang P."/>
            <person name="Chu C."/>
            <person name="Hu S."/>
            <person name="Bao Q."/>
            <person name="Yu J."/>
            <person name="Chou Y.-Y."/>
            <person name="Wang H.-S."/>
            <person name="Lee Y.-S."/>
        </authorList>
    </citation>
    <scope>NUCLEOTIDE SEQUENCE [LARGE SCALE GENOMIC DNA]</scope>
    <source>
        <strain>SC-B67</strain>
    </source>
</reference>
<evidence type="ECO:0000255" key="1">
    <source>
        <dbReference type="HAMAP-Rule" id="MF_01080"/>
    </source>
</evidence>
<comment type="function">
    <text evidence="1">Responsible for synthesis of pseudouridine from uracil-55 in the psi GC loop of transfer RNAs.</text>
</comment>
<comment type="catalytic activity">
    <reaction evidence="1">
        <text>uridine(55) in tRNA = pseudouridine(55) in tRNA</text>
        <dbReference type="Rhea" id="RHEA:42532"/>
        <dbReference type="Rhea" id="RHEA-COMP:10101"/>
        <dbReference type="Rhea" id="RHEA-COMP:10102"/>
        <dbReference type="ChEBI" id="CHEBI:65314"/>
        <dbReference type="ChEBI" id="CHEBI:65315"/>
        <dbReference type="EC" id="5.4.99.25"/>
    </reaction>
</comment>
<comment type="similarity">
    <text evidence="1">Belongs to the pseudouridine synthase TruB family. Type 1 subfamily.</text>
</comment>
<organism>
    <name type="scientific">Salmonella choleraesuis (strain SC-B67)</name>
    <dbReference type="NCBI Taxonomy" id="321314"/>
    <lineage>
        <taxon>Bacteria</taxon>
        <taxon>Pseudomonadati</taxon>
        <taxon>Pseudomonadota</taxon>
        <taxon>Gammaproteobacteria</taxon>
        <taxon>Enterobacterales</taxon>
        <taxon>Enterobacteriaceae</taxon>
        <taxon>Salmonella</taxon>
    </lineage>
</organism>
<proteinExistence type="inferred from homology"/>
<feature type="chain" id="PRO_0000229380" description="tRNA pseudouridine synthase B">
    <location>
        <begin position="1"/>
        <end position="314"/>
    </location>
</feature>
<feature type="active site" description="Nucleophile" evidence="1">
    <location>
        <position position="48"/>
    </location>
</feature>
<feature type="binding site" evidence="1">
    <location>
        <position position="43"/>
    </location>
    <ligand>
        <name>substrate</name>
    </ligand>
</feature>
<feature type="binding site" evidence="1">
    <location>
        <position position="76"/>
    </location>
    <ligand>
        <name>substrate</name>
    </ligand>
</feature>
<feature type="binding site" evidence="1">
    <location>
        <position position="179"/>
    </location>
    <ligand>
        <name>substrate</name>
    </ligand>
</feature>
<feature type="binding site" evidence="1">
    <location>
        <position position="200"/>
    </location>
    <ligand>
        <name>substrate</name>
    </ligand>
</feature>
<dbReference type="EC" id="5.4.99.25" evidence="1"/>
<dbReference type="EMBL" id="AE017220">
    <property type="protein sequence ID" value="AAX67131.1"/>
    <property type="molecule type" value="Genomic_DNA"/>
</dbReference>
<dbReference type="RefSeq" id="WP_000089674.1">
    <property type="nucleotide sequence ID" value="NC_006905.1"/>
</dbReference>
<dbReference type="SMR" id="Q57JI1"/>
<dbReference type="KEGG" id="sec:SCH_3225"/>
<dbReference type="HOGENOM" id="CLU_032087_0_3_6"/>
<dbReference type="Proteomes" id="UP000000538">
    <property type="component" value="Chromosome"/>
</dbReference>
<dbReference type="GO" id="GO:0003723">
    <property type="term" value="F:RNA binding"/>
    <property type="evidence" value="ECO:0007669"/>
    <property type="project" value="InterPro"/>
</dbReference>
<dbReference type="GO" id="GO:0160148">
    <property type="term" value="F:tRNA pseudouridine(55) synthase activity"/>
    <property type="evidence" value="ECO:0007669"/>
    <property type="project" value="UniProtKB-EC"/>
</dbReference>
<dbReference type="GO" id="GO:1990481">
    <property type="term" value="P:mRNA pseudouridine synthesis"/>
    <property type="evidence" value="ECO:0007669"/>
    <property type="project" value="TreeGrafter"/>
</dbReference>
<dbReference type="GO" id="GO:0031119">
    <property type="term" value="P:tRNA pseudouridine synthesis"/>
    <property type="evidence" value="ECO:0007669"/>
    <property type="project" value="UniProtKB-UniRule"/>
</dbReference>
<dbReference type="CDD" id="cd02573">
    <property type="entry name" value="PseudoU_synth_EcTruB"/>
    <property type="match status" value="1"/>
</dbReference>
<dbReference type="CDD" id="cd21152">
    <property type="entry name" value="PUA_TruB_bacterial"/>
    <property type="match status" value="1"/>
</dbReference>
<dbReference type="FunFam" id="2.30.130.10:FF:000004">
    <property type="entry name" value="tRNA pseudouridine synthase B"/>
    <property type="match status" value="1"/>
</dbReference>
<dbReference type="FunFam" id="3.30.2350.10:FF:000003">
    <property type="entry name" value="tRNA pseudouridine synthase B"/>
    <property type="match status" value="1"/>
</dbReference>
<dbReference type="Gene3D" id="3.30.2350.10">
    <property type="entry name" value="Pseudouridine synthase"/>
    <property type="match status" value="1"/>
</dbReference>
<dbReference type="Gene3D" id="2.30.130.10">
    <property type="entry name" value="PUA domain"/>
    <property type="match status" value="1"/>
</dbReference>
<dbReference type="HAMAP" id="MF_01080">
    <property type="entry name" value="TruB_bact"/>
    <property type="match status" value="1"/>
</dbReference>
<dbReference type="InterPro" id="IPR020103">
    <property type="entry name" value="PsdUridine_synth_cat_dom_sf"/>
</dbReference>
<dbReference type="InterPro" id="IPR002501">
    <property type="entry name" value="PsdUridine_synth_N"/>
</dbReference>
<dbReference type="InterPro" id="IPR015947">
    <property type="entry name" value="PUA-like_sf"/>
</dbReference>
<dbReference type="InterPro" id="IPR036974">
    <property type="entry name" value="PUA_sf"/>
</dbReference>
<dbReference type="InterPro" id="IPR014780">
    <property type="entry name" value="tRNA_psdUridine_synth_TruB"/>
</dbReference>
<dbReference type="InterPro" id="IPR015240">
    <property type="entry name" value="tRNA_sdUridine_synth_fam1_C"/>
</dbReference>
<dbReference type="InterPro" id="IPR032819">
    <property type="entry name" value="TruB_C"/>
</dbReference>
<dbReference type="NCBIfam" id="TIGR00431">
    <property type="entry name" value="TruB"/>
    <property type="match status" value="1"/>
</dbReference>
<dbReference type="PANTHER" id="PTHR13767:SF2">
    <property type="entry name" value="PSEUDOURIDYLATE SYNTHASE TRUB1"/>
    <property type="match status" value="1"/>
</dbReference>
<dbReference type="PANTHER" id="PTHR13767">
    <property type="entry name" value="TRNA-PSEUDOURIDINE SYNTHASE"/>
    <property type="match status" value="1"/>
</dbReference>
<dbReference type="Pfam" id="PF09157">
    <property type="entry name" value="TruB-C_2"/>
    <property type="match status" value="1"/>
</dbReference>
<dbReference type="Pfam" id="PF16198">
    <property type="entry name" value="TruB_C_2"/>
    <property type="match status" value="1"/>
</dbReference>
<dbReference type="Pfam" id="PF01509">
    <property type="entry name" value="TruB_N"/>
    <property type="match status" value="1"/>
</dbReference>
<dbReference type="SUPFAM" id="SSF55120">
    <property type="entry name" value="Pseudouridine synthase"/>
    <property type="match status" value="1"/>
</dbReference>
<dbReference type="SUPFAM" id="SSF88697">
    <property type="entry name" value="PUA domain-like"/>
    <property type="match status" value="1"/>
</dbReference>
<sequence length="314" mass="35042">MSRPRRRGRDIHGVLLLDKPQGMSSNDVLQKVKRIYNANRAGHTGALDPLATGMLPICLGEATKFSQYLLDSDKRYRVIARLGQRTDTSDADGQIVQERPVTFSAEQLASALETFRGDIEQIPSMYSALKYQGKKLYEYARQGIEVPREARPITVYELLFIRHEGNELELEVHCSKGTYIRTIIDDLGEKLGCGAHVTYLRRLTVSKYPVDRMVTLEHLQTLVAQAEQQGVPAAQLLDPLLMPMDSPASDYPVVNLPLTSSVYFKNGNPVRTTGAPLKGLVRVTEGEDDKFIGMGEIDDEGRVAPRRLVVEYPA</sequence>
<gene>
    <name evidence="1" type="primary">truB</name>
    <name type="ordered locus">SCH_3225</name>
</gene>
<accession>Q57JI1</accession>
<protein>
    <recommendedName>
        <fullName evidence="1">tRNA pseudouridine synthase B</fullName>
        <ecNumber evidence="1">5.4.99.25</ecNumber>
    </recommendedName>
    <alternativeName>
        <fullName evidence="1">tRNA pseudouridine(55) synthase</fullName>
        <shortName evidence="1">Psi55 synthase</shortName>
    </alternativeName>
    <alternativeName>
        <fullName evidence="1">tRNA pseudouridylate synthase</fullName>
    </alternativeName>
    <alternativeName>
        <fullName evidence="1">tRNA-uridine isomerase</fullName>
    </alternativeName>
</protein>
<keyword id="KW-0413">Isomerase</keyword>
<keyword id="KW-0819">tRNA processing</keyword>